<dbReference type="EMBL" id="Z73000">
    <property type="protein sequence ID" value="CAA97242.1"/>
    <property type="molecule type" value="Genomic_DNA"/>
</dbReference>
<dbReference type="EMBL" id="AY558379">
    <property type="protein sequence ID" value="AAS56705.1"/>
    <property type="molecule type" value="Genomic_DNA"/>
</dbReference>
<dbReference type="EMBL" id="BK006941">
    <property type="protein sequence ID" value="DAA08309.1"/>
    <property type="molecule type" value="Genomic_DNA"/>
</dbReference>
<dbReference type="PIR" id="S64538">
    <property type="entry name" value="S64538"/>
</dbReference>
<dbReference type="RefSeq" id="NP_011731.3">
    <property type="nucleotide sequence ID" value="NM_001181344.3"/>
</dbReference>
<dbReference type="PDB" id="5MRC">
    <property type="method" value="EM"/>
    <property type="resolution" value="3.25 A"/>
    <property type="chains" value="XX=1-96"/>
</dbReference>
<dbReference type="PDB" id="5MRE">
    <property type="method" value="EM"/>
    <property type="resolution" value="3.75 A"/>
    <property type="chains" value="XX=1-96"/>
</dbReference>
<dbReference type="PDB" id="5MRF">
    <property type="method" value="EM"/>
    <property type="resolution" value="4.97 A"/>
    <property type="chains" value="XX=1-96"/>
</dbReference>
<dbReference type="PDB" id="8D8K">
    <property type="method" value="EM"/>
    <property type="resolution" value="3.13 A"/>
    <property type="chains" value="X=1-110"/>
</dbReference>
<dbReference type="PDB" id="8D8L">
    <property type="method" value="EM"/>
    <property type="resolution" value="2.60 A"/>
    <property type="chains" value="X=1-110"/>
</dbReference>
<dbReference type="PDB" id="8OM2">
    <property type="method" value="EM"/>
    <property type="resolution" value="2.57 A"/>
    <property type="chains" value="X=1-110"/>
</dbReference>
<dbReference type="PDB" id="8OM3">
    <property type="method" value="EM"/>
    <property type="resolution" value="2.87 A"/>
    <property type="chains" value="X=1-110"/>
</dbReference>
<dbReference type="PDB" id="8OM4">
    <property type="method" value="EM"/>
    <property type="resolution" value="2.32 A"/>
    <property type="chains" value="X=1-110"/>
</dbReference>
<dbReference type="PDBsum" id="5MRC"/>
<dbReference type="PDBsum" id="5MRE"/>
<dbReference type="PDBsum" id="5MRF"/>
<dbReference type="PDBsum" id="8D8K"/>
<dbReference type="PDBsum" id="8D8L"/>
<dbReference type="PDBsum" id="8OM2"/>
<dbReference type="PDBsum" id="8OM3"/>
<dbReference type="PDBsum" id="8OM4"/>
<dbReference type="EMDB" id="EMD-16966"/>
<dbReference type="EMDB" id="EMD-16967"/>
<dbReference type="EMDB" id="EMD-16968"/>
<dbReference type="EMDB" id="EMD-27250"/>
<dbReference type="EMDB" id="EMD-27251"/>
<dbReference type="EMDB" id="EMD-3551"/>
<dbReference type="EMDB" id="EMD-3552"/>
<dbReference type="EMDB" id="EMD-3553"/>
<dbReference type="SMR" id="P53305"/>
<dbReference type="BioGRID" id="33468">
    <property type="interactions" value="132"/>
</dbReference>
<dbReference type="ComplexPortal" id="CPX-1603">
    <property type="entry name" value="37S mitochondrial small ribosomal subunit"/>
</dbReference>
<dbReference type="DIP" id="DIP-5606N"/>
<dbReference type="FunCoup" id="P53305">
    <property type="interactions" value="275"/>
</dbReference>
<dbReference type="IntAct" id="P53305">
    <property type="interactions" value="39"/>
</dbReference>
<dbReference type="MINT" id="P53305"/>
<dbReference type="STRING" id="4932.YGR215W"/>
<dbReference type="PaxDb" id="4932-YGR215W"/>
<dbReference type="PeptideAtlas" id="P53305"/>
<dbReference type="EnsemblFungi" id="YGR215W_mRNA">
    <property type="protein sequence ID" value="YGR215W"/>
    <property type="gene ID" value="YGR215W"/>
</dbReference>
<dbReference type="GeneID" id="853129"/>
<dbReference type="KEGG" id="sce:YGR215W"/>
<dbReference type="AGR" id="SGD:S000003447"/>
<dbReference type="SGD" id="S000003447">
    <property type="gene designation" value="RSM27"/>
</dbReference>
<dbReference type="VEuPathDB" id="FungiDB:YGR215W"/>
<dbReference type="eggNOG" id="KOG4844">
    <property type="taxonomic scope" value="Eukaryota"/>
</dbReference>
<dbReference type="HOGENOM" id="CLU_150777_0_0_1"/>
<dbReference type="InParanoid" id="P53305"/>
<dbReference type="OMA" id="MKAQCQV"/>
<dbReference type="OrthoDB" id="2257454at2759"/>
<dbReference type="BioCyc" id="YEAST:G3O-30897-MONOMER"/>
<dbReference type="BioGRID-ORCS" id="853129">
    <property type="hits" value="0 hits in 10 CRISPR screens"/>
</dbReference>
<dbReference type="PRO" id="PR:P53305"/>
<dbReference type="Proteomes" id="UP000002311">
    <property type="component" value="Chromosome VII"/>
</dbReference>
<dbReference type="RNAct" id="P53305">
    <property type="molecule type" value="protein"/>
</dbReference>
<dbReference type="GO" id="GO:0005743">
    <property type="term" value="C:mitochondrial inner membrane"/>
    <property type="evidence" value="ECO:0000303"/>
    <property type="project" value="ComplexPortal"/>
</dbReference>
<dbReference type="GO" id="GO:0005763">
    <property type="term" value="C:mitochondrial small ribosomal subunit"/>
    <property type="evidence" value="ECO:0000314"/>
    <property type="project" value="SGD"/>
</dbReference>
<dbReference type="GO" id="GO:0005739">
    <property type="term" value="C:mitochondrion"/>
    <property type="evidence" value="ECO:0007005"/>
    <property type="project" value="SGD"/>
</dbReference>
<dbReference type="GO" id="GO:0003735">
    <property type="term" value="F:structural constituent of ribosome"/>
    <property type="evidence" value="ECO:0000314"/>
    <property type="project" value="SGD"/>
</dbReference>
<dbReference type="GO" id="GO:0032543">
    <property type="term" value="P:mitochondrial translation"/>
    <property type="evidence" value="ECO:0000303"/>
    <property type="project" value="ComplexPortal"/>
</dbReference>
<dbReference type="InterPro" id="IPR013219">
    <property type="entry name" value="Ribosomal_mS33"/>
</dbReference>
<dbReference type="PANTHER" id="PTHR13362">
    <property type="entry name" value="MITOCHONDRIAL RIBOSOMAL PROTEIN S33"/>
    <property type="match status" value="1"/>
</dbReference>
<dbReference type="PANTHER" id="PTHR13362:SF2">
    <property type="entry name" value="SMALL RIBOSOMAL SUBUNIT PROTEIN MS33"/>
    <property type="match status" value="1"/>
</dbReference>
<dbReference type="Pfam" id="PF08293">
    <property type="entry name" value="MRP-S33"/>
    <property type="match status" value="1"/>
</dbReference>
<sequence>MNVPKARLLKVAELSAKIFDQNFNPSGIRTGSKILNERLKGPSVASYYGNPDILKFRHLKTLYPDIEFVDLEEQYRLSMVEAKKRRGKGAPKKMKKDAAATAKGKGKKKK</sequence>
<comment type="function">
    <text evidence="10 11">Component of the mitochondrial ribosome (mitoribosome), a dedicated translation machinery responsible for the synthesis of mitochondrial genome-encoded proteins, including at least some of the essential transmembrane subunits of the mitochondrial respiratory chain. The mitoribosomes are attached to the mitochondrial inner membrane and translation products are cotranslationally integrated into the membrane.</text>
</comment>
<comment type="subunit">
    <text evidence="2 3 7">Component of the mitochondrial small ribosomal subunit (mt-SSU). Mature yeast 74S mitochondrial ribosomes consist of a small (37S) and a large (54S) subunit. The 37S small subunit contains a 15S ribosomal RNA (15S mt-rRNA) and 34 different proteins. The 54S large subunit contains a 21S rRNA (21S mt-rRNA) and 46 different proteins.</text>
</comment>
<comment type="subcellular location">
    <subcellularLocation>
        <location evidence="2 4 5">Mitochondrion</location>
    </subcellularLocation>
    <text evidence="6">Mitoribosomes are tethered to the mitochondrial inner membrane and spatially aligned with the membrane insertion machinery through two distinct membrane contact sites, formed by the 21S rRNA expansion segment 96-ES1 and the inner membrane protein MBA1.</text>
</comment>
<comment type="similarity">
    <text evidence="9">Belongs to the mitochondrion-specific ribosomal protein mS33 family.</text>
</comment>
<proteinExistence type="evidence at protein level"/>
<feature type="chain" id="PRO_0000202847" description="Small ribosomal subunit protein mS33">
    <location>
        <begin position="1"/>
        <end position="110"/>
    </location>
</feature>
<feature type="region of interest" description="Disordered" evidence="1">
    <location>
        <begin position="84"/>
        <end position="110"/>
    </location>
</feature>
<feature type="compositionally biased region" description="Basic residues" evidence="1">
    <location>
        <begin position="84"/>
        <end position="95"/>
    </location>
</feature>
<feature type="helix" evidence="13">
    <location>
        <begin position="5"/>
        <end position="19"/>
    </location>
</feature>
<feature type="helix" evidence="13">
    <location>
        <begin position="32"/>
        <end position="36"/>
    </location>
</feature>
<feature type="helix" evidence="13">
    <location>
        <begin position="41"/>
        <end position="45"/>
    </location>
</feature>
<feature type="turn" evidence="13">
    <location>
        <begin position="46"/>
        <end position="48"/>
    </location>
</feature>
<feature type="helix" evidence="13">
    <location>
        <begin position="56"/>
        <end position="62"/>
    </location>
</feature>
<feature type="strand" evidence="12">
    <location>
        <begin position="64"/>
        <end position="66"/>
    </location>
</feature>
<feature type="helix" evidence="13">
    <location>
        <begin position="71"/>
        <end position="85"/>
    </location>
</feature>
<reference key="1">
    <citation type="journal article" date="1997" name="Yeast">
        <title>Sequence analysis of 203 kilobases from Saccharomyces cerevisiae chromosome VII.</title>
        <authorList>
            <person name="Rieger M."/>
            <person name="Brueckner M."/>
            <person name="Schaefer M."/>
            <person name="Mueller-Auer S."/>
        </authorList>
    </citation>
    <scope>NUCLEOTIDE SEQUENCE [GENOMIC DNA]</scope>
    <source>
        <strain>ATCC 204508 / S288c</strain>
    </source>
</reference>
<reference key="2">
    <citation type="journal article" date="1997" name="Nature">
        <title>The nucleotide sequence of Saccharomyces cerevisiae chromosome VII.</title>
        <authorList>
            <person name="Tettelin H."/>
            <person name="Agostoni-Carbone M.L."/>
            <person name="Albermann K."/>
            <person name="Albers M."/>
            <person name="Arroyo J."/>
            <person name="Backes U."/>
            <person name="Barreiros T."/>
            <person name="Bertani I."/>
            <person name="Bjourson A.J."/>
            <person name="Brueckner M."/>
            <person name="Bruschi C.V."/>
            <person name="Carignani G."/>
            <person name="Castagnoli L."/>
            <person name="Cerdan E."/>
            <person name="Clemente M.L."/>
            <person name="Coblenz A."/>
            <person name="Coglievina M."/>
            <person name="Coissac E."/>
            <person name="Defoor E."/>
            <person name="Del Bino S."/>
            <person name="Delius H."/>
            <person name="Delneri D."/>
            <person name="de Wergifosse P."/>
            <person name="Dujon B."/>
            <person name="Durand P."/>
            <person name="Entian K.-D."/>
            <person name="Eraso P."/>
            <person name="Escribano V."/>
            <person name="Fabiani L."/>
            <person name="Fartmann B."/>
            <person name="Feroli F."/>
            <person name="Feuermann M."/>
            <person name="Frontali L."/>
            <person name="Garcia-Gonzalez M."/>
            <person name="Garcia-Saez M.I."/>
            <person name="Goffeau A."/>
            <person name="Guerreiro P."/>
            <person name="Hani J."/>
            <person name="Hansen M."/>
            <person name="Hebling U."/>
            <person name="Hernandez K."/>
            <person name="Heumann K."/>
            <person name="Hilger F."/>
            <person name="Hofmann B."/>
            <person name="Indge K.J."/>
            <person name="James C.M."/>
            <person name="Klima R."/>
            <person name="Koetter P."/>
            <person name="Kramer B."/>
            <person name="Kramer W."/>
            <person name="Lauquin G."/>
            <person name="Leuther H."/>
            <person name="Louis E.J."/>
            <person name="Maillier E."/>
            <person name="Marconi A."/>
            <person name="Martegani E."/>
            <person name="Mazon M.J."/>
            <person name="Mazzoni C."/>
            <person name="McReynolds A.D.K."/>
            <person name="Melchioretto P."/>
            <person name="Mewes H.-W."/>
            <person name="Minenkova O."/>
            <person name="Mueller-Auer S."/>
            <person name="Nawrocki A."/>
            <person name="Netter P."/>
            <person name="Neu R."/>
            <person name="Nombela C."/>
            <person name="Oliver S.G."/>
            <person name="Panzeri L."/>
            <person name="Paoluzi S."/>
            <person name="Plevani P."/>
            <person name="Portetelle D."/>
            <person name="Portillo F."/>
            <person name="Potier S."/>
            <person name="Purnelle B."/>
            <person name="Rieger M."/>
            <person name="Riles L."/>
            <person name="Rinaldi T."/>
            <person name="Robben J."/>
            <person name="Rodrigues-Pousada C."/>
            <person name="Rodriguez-Belmonte E."/>
            <person name="Rodriguez-Torres A.M."/>
            <person name="Rose M."/>
            <person name="Ruzzi M."/>
            <person name="Saliola M."/>
            <person name="Sanchez-Perez M."/>
            <person name="Schaefer B."/>
            <person name="Schaefer M."/>
            <person name="Scharfe M."/>
            <person name="Schmidheini T."/>
            <person name="Schreer A."/>
            <person name="Skala J."/>
            <person name="Souciet J.-L."/>
            <person name="Steensma H.Y."/>
            <person name="Talla E."/>
            <person name="Thierry A."/>
            <person name="Vandenbol M."/>
            <person name="van der Aart Q.J.M."/>
            <person name="Van Dyck L."/>
            <person name="Vanoni M."/>
            <person name="Verhasselt P."/>
            <person name="Voet M."/>
            <person name="Volckaert G."/>
            <person name="Wambutt R."/>
            <person name="Watson M.D."/>
            <person name="Weber N."/>
            <person name="Wedler E."/>
            <person name="Wedler H."/>
            <person name="Wipfli P."/>
            <person name="Wolf K."/>
            <person name="Wright L.F."/>
            <person name="Zaccaria P."/>
            <person name="Zimmermann M."/>
            <person name="Zollner A."/>
            <person name="Kleine K."/>
        </authorList>
    </citation>
    <scope>NUCLEOTIDE SEQUENCE [LARGE SCALE GENOMIC DNA]</scope>
    <source>
        <strain>ATCC 204508 / S288c</strain>
    </source>
</reference>
<reference key="3">
    <citation type="journal article" date="2014" name="G3 (Bethesda)">
        <title>The reference genome sequence of Saccharomyces cerevisiae: Then and now.</title>
        <authorList>
            <person name="Engel S.R."/>
            <person name="Dietrich F.S."/>
            <person name="Fisk D.G."/>
            <person name="Binkley G."/>
            <person name="Balakrishnan R."/>
            <person name="Costanzo M.C."/>
            <person name="Dwight S.S."/>
            <person name="Hitz B.C."/>
            <person name="Karra K."/>
            <person name="Nash R.S."/>
            <person name="Weng S."/>
            <person name="Wong E.D."/>
            <person name="Lloyd P."/>
            <person name="Skrzypek M.S."/>
            <person name="Miyasato S.R."/>
            <person name="Simison M."/>
            <person name="Cherry J.M."/>
        </authorList>
    </citation>
    <scope>GENOME REANNOTATION</scope>
    <source>
        <strain>ATCC 204508 / S288c</strain>
    </source>
</reference>
<reference key="4">
    <citation type="journal article" date="2007" name="Genome Res.">
        <title>Approaching a complete repository of sequence-verified protein-encoding clones for Saccharomyces cerevisiae.</title>
        <authorList>
            <person name="Hu Y."/>
            <person name="Rolfs A."/>
            <person name="Bhullar B."/>
            <person name="Murthy T.V.S."/>
            <person name="Zhu C."/>
            <person name="Berger M.F."/>
            <person name="Camargo A.A."/>
            <person name="Kelley F."/>
            <person name="McCarron S."/>
            <person name="Jepson D."/>
            <person name="Richardson A."/>
            <person name="Raphael J."/>
            <person name="Moreira D."/>
            <person name="Taycher E."/>
            <person name="Zuo D."/>
            <person name="Mohr S."/>
            <person name="Kane M.F."/>
            <person name="Williamson J."/>
            <person name="Simpson A.J.G."/>
            <person name="Bulyk M.L."/>
            <person name="Harlow E."/>
            <person name="Marsischky G."/>
            <person name="Kolodner R.D."/>
            <person name="LaBaer J."/>
        </authorList>
    </citation>
    <scope>NUCLEOTIDE SEQUENCE [GENOMIC DNA]</scope>
    <source>
        <strain>ATCC 204508 / S288c</strain>
    </source>
</reference>
<reference key="5">
    <citation type="journal article" date="2001" name="J. Biol. Chem.">
        <title>Identification of 12 new yeast mitochondrial ribosomal proteins including 6 that have no prokaryotic homologues.</title>
        <authorList>
            <person name="Saveanu C."/>
            <person name="Fromont-Racine M."/>
            <person name="Harington A."/>
            <person name="Ricard F."/>
            <person name="Namane A."/>
            <person name="Jacquier A."/>
        </authorList>
    </citation>
    <scope>SUBCELLULAR LOCATION</scope>
    <scope>IDENTIFICATION IN THE MITOCHONDRIAL RIBOSOMAL SMALL COMPLEX</scope>
    <scope>IDENTIFICATION BY MASS SPECTROMETRY</scope>
</reference>
<reference key="6">
    <citation type="journal article" date="2002" name="Eur. J. Biochem.">
        <title>Tag-mediated isolation of yeast mitochondrial ribosome and mass spectrometric identification of its new components.</title>
        <authorList>
            <person name="Gan X."/>
            <person name="Kitakawa M."/>
            <person name="Yoshino K."/>
            <person name="Oshiro N."/>
            <person name="Yonezawa K."/>
            <person name="Isono K."/>
        </authorList>
    </citation>
    <scope>IDENTIFICATION IN THE MITOCHONDRIAL RIBOSOMAL SMALL COMPLEX</scope>
    <scope>IDENTIFICATION BY MASS SPECTROMETRY</scope>
</reference>
<reference key="7">
    <citation type="journal article" date="2003" name="Nature">
        <title>Global analysis of protein localization in budding yeast.</title>
        <authorList>
            <person name="Huh W.-K."/>
            <person name="Falvo J.V."/>
            <person name="Gerke L.C."/>
            <person name="Carroll A.S."/>
            <person name="Howson R.W."/>
            <person name="Weissman J.S."/>
            <person name="O'Shea E.K."/>
        </authorList>
    </citation>
    <scope>SUBCELLULAR LOCATION [LARGE SCALE ANALYSIS]</scope>
</reference>
<reference key="8">
    <citation type="journal article" date="2003" name="Proc. Natl. Acad. Sci. U.S.A.">
        <title>The proteome of Saccharomyces cerevisiae mitochondria.</title>
        <authorList>
            <person name="Sickmann A."/>
            <person name="Reinders J."/>
            <person name="Wagner Y."/>
            <person name="Joppich C."/>
            <person name="Zahedi R.P."/>
            <person name="Meyer H.E."/>
            <person name="Schoenfisch B."/>
            <person name="Perschil I."/>
            <person name="Chacinska A."/>
            <person name="Guiard B."/>
            <person name="Rehling P."/>
            <person name="Pfanner N."/>
            <person name="Meisinger C."/>
        </authorList>
    </citation>
    <scope>SUBCELLULAR LOCATION [LARGE SCALE ANALYSIS]</scope>
    <source>
        <strain>ATCC 76625 / YPH499</strain>
    </source>
</reference>
<reference key="9">
    <citation type="journal article" date="2012" name="Proc. Natl. Acad. Sci. U.S.A.">
        <title>N-terminal acetylome analyses and functional insights of the N-terminal acetyltransferase NatB.</title>
        <authorList>
            <person name="Van Damme P."/>
            <person name="Lasa M."/>
            <person name="Polevoda B."/>
            <person name="Gazquez C."/>
            <person name="Elosegui-Artola A."/>
            <person name="Kim D.S."/>
            <person name="De Juan-Pardo E."/>
            <person name="Demeyer K."/>
            <person name="Hole K."/>
            <person name="Larrea E."/>
            <person name="Timmerman E."/>
            <person name="Prieto J."/>
            <person name="Arnesen T."/>
            <person name="Sherman F."/>
            <person name="Gevaert K."/>
            <person name="Aldabe R."/>
        </authorList>
    </citation>
    <scope>IDENTIFICATION BY MASS SPECTROMETRY [LARGE SCALE ANALYSIS]</scope>
</reference>
<reference key="10">
    <citation type="journal article" date="2015" name="Nat. Commun.">
        <title>Organization of the mitochondrial translation machinery studied in situ by cryoelectron tomography.</title>
        <authorList>
            <person name="Pfeffer S."/>
            <person name="Woellhaf M.W."/>
            <person name="Herrmann J.M."/>
            <person name="Forster F."/>
        </authorList>
    </citation>
    <scope>SUBCELLULAR LOCATION</scope>
</reference>
<reference key="11">
    <citation type="journal article" date="2017" name="Science">
        <title>The structure of the yeast mitochondrial ribosome.</title>
        <authorList>
            <person name="Desai N."/>
            <person name="Brown A."/>
            <person name="Amunts A."/>
            <person name="Ramakrishnan V."/>
        </authorList>
    </citation>
    <scope>STRUCTURE BY ELECTRON MICROSCOPY (3.25 ANGSTROMS)</scope>
    <scope>SUBUNIT</scope>
</reference>
<organism>
    <name type="scientific">Saccharomyces cerevisiae (strain ATCC 204508 / S288c)</name>
    <name type="common">Baker's yeast</name>
    <dbReference type="NCBI Taxonomy" id="559292"/>
    <lineage>
        <taxon>Eukaryota</taxon>
        <taxon>Fungi</taxon>
        <taxon>Dikarya</taxon>
        <taxon>Ascomycota</taxon>
        <taxon>Saccharomycotina</taxon>
        <taxon>Saccharomycetes</taxon>
        <taxon>Saccharomycetales</taxon>
        <taxon>Saccharomycetaceae</taxon>
        <taxon>Saccharomyces</taxon>
    </lineage>
</organism>
<protein>
    <recommendedName>
        <fullName evidence="8">Small ribosomal subunit protein mS33</fullName>
    </recommendedName>
    <alternativeName>
        <fullName>Mitochondrial 37S ribosomal protein S27</fullName>
    </alternativeName>
</protein>
<accession>P53305</accession>
<accession>D6VUZ8</accession>
<name>RT27_YEAST</name>
<evidence type="ECO:0000256" key="1">
    <source>
        <dbReference type="SAM" id="MobiDB-lite"/>
    </source>
</evidence>
<evidence type="ECO:0000269" key="2">
    <source>
    </source>
</evidence>
<evidence type="ECO:0000269" key="3">
    <source>
    </source>
</evidence>
<evidence type="ECO:0000269" key="4">
    <source>
    </source>
</evidence>
<evidence type="ECO:0000269" key="5">
    <source>
    </source>
</evidence>
<evidence type="ECO:0000269" key="6">
    <source>
    </source>
</evidence>
<evidence type="ECO:0000269" key="7">
    <source>
    </source>
</evidence>
<evidence type="ECO:0000303" key="8">
    <source>
    </source>
</evidence>
<evidence type="ECO:0000305" key="9"/>
<evidence type="ECO:0000305" key="10">
    <source>
    </source>
</evidence>
<evidence type="ECO:0000305" key="11">
    <source>
    </source>
</evidence>
<evidence type="ECO:0007829" key="12">
    <source>
        <dbReference type="PDB" id="8D8K"/>
    </source>
</evidence>
<evidence type="ECO:0007829" key="13">
    <source>
        <dbReference type="PDB" id="8D8L"/>
    </source>
</evidence>
<keyword id="KW-0002">3D-structure</keyword>
<keyword id="KW-0496">Mitochondrion</keyword>
<keyword id="KW-1185">Reference proteome</keyword>
<keyword id="KW-0687">Ribonucleoprotein</keyword>
<keyword id="KW-0689">Ribosomal protein</keyword>
<gene>
    <name type="primary">RSM27</name>
    <name type="ordered locus">YGR215W</name>
</gene>